<accession>P9WJ62</accession>
<accession>L0TA51</accession>
<accession>O07264</accession>
<accession>Q50760</accession>
<accession>Q79FL7</accession>
<accession>Q7D847</accession>
<proteinExistence type="evidence at protein level"/>
<organism>
    <name type="scientific">Mycobacterium tuberculosis (strain CDC 1551 / Oshkosh)</name>
    <dbReference type="NCBI Taxonomy" id="83331"/>
    <lineage>
        <taxon>Bacteria</taxon>
        <taxon>Bacillati</taxon>
        <taxon>Actinomycetota</taxon>
        <taxon>Actinomycetes</taxon>
        <taxon>Mycobacteriales</taxon>
        <taxon>Mycobacteriaceae</taxon>
        <taxon>Mycobacterium</taxon>
        <taxon>Mycobacterium tuberculosis complex</taxon>
    </lineage>
</organism>
<sequence length="268" mass="28074">MARRARVDAELVRRGLARSRQQAAELIGAGKVRIDGLPAVKPATAVSDTTALTVVTDSERAWVSRGAHKLVGALEAFAIAVAGRRCLDAGASTGGFTEVLLDRGAAHVVAADVGYGQLAWSLRNDPRVVVLERTNARGLTPEAIGGRVDLVVADLSFISLATVLPALVGCASRDADIVPLVKPQFEVGKGQVGPGGVVHDPQLRARSVLAVARRAQELGWHSVGVKASPLPGPSGNVEYFLWLRTQTDRALSAKGLEDAVHRAISEGP</sequence>
<evidence type="ECO:0000250" key="1">
    <source>
        <dbReference type="UniProtKB" id="P9WJ63"/>
    </source>
</evidence>
<evidence type="ECO:0000255" key="2">
    <source>
        <dbReference type="PROSITE-ProRule" id="PRU00182"/>
    </source>
</evidence>
<evidence type="ECO:0000269" key="3">
    <source>
    </source>
</evidence>
<evidence type="ECO:0000305" key="4"/>
<evidence type="ECO:0007829" key="5">
    <source>
        <dbReference type="PDB" id="5EOV"/>
    </source>
</evidence>
<dbReference type="EC" id="2.1.1.226" evidence="1"/>
<dbReference type="EC" id="2.1.1.227" evidence="1"/>
<dbReference type="EMBL" id="AE000516">
    <property type="protein sequence ID" value="AAK46002.1"/>
    <property type="molecule type" value="Genomic_DNA"/>
</dbReference>
<dbReference type="PIR" id="E70502">
    <property type="entry name" value="E70502"/>
</dbReference>
<dbReference type="RefSeq" id="WP_003408382.1">
    <property type="nucleotide sequence ID" value="NZ_KK341227.1"/>
</dbReference>
<dbReference type="PDB" id="5EOV">
    <property type="method" value="X-ray"/>
    <property type="resolution" value="1.70 A"/>
    <property type="chains" value="A=64-268"/>
</dbReference>
<dbReference type="PDBsum" id="5EOV"/>
<dbReference type="SMR" id="P9WJ62"/>
<dbReference type="GeneID" id="45425663"/>
<dbReference type="KEGG" id="mtc:MT1733"/>
<dbReference type="PATRIC" id="fig|83331.31.peg.1861"/>
<dbReference type="HOGENOM" id="CLU_058015_1_0_11"/>
<dbReference type="Proteomes" id="UP000001020">
    <property type="component" value="Chromosome"/>
</dbReference>
<dbReference type="GO" id="GO:0005737">
    <property type="term" value="C:cytoplasm"/>
    <property type="evidence" value="ECO:0007669"/>
    <property type="project" value="UniProtKB-SubCell"/>
</dbReference>
<dbReference type="GO" id="GO:0005576">
    <property type="term" value="C:extracellular region"/>
    <property type="evidence" value="ECO:0007669"/>
    <property type="project" value="UniProtKB-KW"/>
</dbReference>
<dbReference type="GO" id="GO:0020002">
    <property type="term" value="C:host cell plasma membrane"/>
    <property type="evidence" value="ECO:0007669"/>
    <property type="project" value="UniProtKB-SubCell"/>
</dbReference>
<dbReference type="GO" id="GO:0016020">
    <property type="term" value="C:membrane"/>
    <property type="evidence" value="ECO:0007669"/>
    <property type="project" value="UniProtKB-KW"/>
</dbReference>
<dbReference type="GO" id="GO:0008168">
    <property type="term" value="F:methyltransferase activity"/>
    <property type="evidence" value="ECO:0007669"/>
    <property type="project" value="UniProtKB-KW"/>
</dbReference>
<dbReference type="GO" id="GO:0003723">
    <property type="term" value="F:RNA binding"/>
    <property type="evidence" value="ECO:0007669"/>
    <property type="project" value="UniProtKB-KW"/>
</dbReference>
<dbReference type="GO" id="GO:0090729">
    <property type="term" value="F:toxin activity"/>
    <property type="evidence" value="ECO:0007669"/>
    <property type="project" value="UniProtKB-KW"/>
</dbReference>
<dbReference type="GO" id="GO:0031640">
    <property type="term" value="P:killing of cells of another organism"/>
    <property type="evidence" value="ECO:0007669"/>
    <property type="project" value="UniProtKB-KW"/>
</dbReference>
<dbReference type="GO" id="GO:0032259">
    <property type="term" value="P:methylation"/>
    <property type="evidence" value="ECO:0007669"/>
    <property type="project" value="UniProtKB-KW"/>
</dbReference>
<dbReference type="GO" id="GO:0006364">
    <property type="term" value="P:rRNA processing"/>
    <property type="evidence" value="ECO:0007669"/>
    <property type="project" value="UniProtKB-KW"/>
</dbReference>
<dbReference type="CDD" id="cd02440">
    <property type="entry name" value="AdoMet_MTases"/>
    <property type="match status" value="1"/>
</dbReference>
<dbReference type="CDD" id="cd00165">
    <property type="entry name" value="S4"/>
    <property type="match status" value="1"/>
</dbReference>
<dbReference type="Gene3D" id="3.10.290.10">
    <property type="entry name" value="RNA-binding S4 domain"/>
    <property type="match status" value="1"/>
</dbReference>
<dbReference type="Gene3D" id="3.40.50.150">
    <property type="entry name" value="Vaccinia Virus protein VP39"/>
    <property type="match status" value="1"/>
</dbReference>
<dbReference type="InterPro" id="IPR004538">
    <property type="entry name" value="Hemolysin_A/TlyA"/>
</dbReference>
<dbReference type="InterPro" id="IPR002877">
    <property type="entry name" value="RNA_MeTrfase_FtsJ_dom"/>
</dbReference>
<dbReference type="InterPro" id="IPR002942">
    <property type="entry name" value="S4_RNA-bd"/>
</dbReference>
<dbReference type="InterPro" id="IPR036986">
    <property type="entry name" value="S4_RNA-bd_sf"/>
</dbReference>
<dbReference type="InterPro" id="IPR029063">
    <property type="entry name" value="SAM-dependent_MTases_sf"/>
</dbReference>
<dbReference type="InterPro" id="IPR047048">
    <property type="entry name" value="TlyA"/>
</dbReference>
<dbReference type="NCBIfam" id="TIGR00478">
    <property type="entry name" value="tly"/>
    <property type="match status" value="1"/>
</dbReference>
<dbReference type="PANTHER" id="PTHR32319">
    <property type="entry name" value="BACTERIAL HEMOLYSIN-LIKE PROTEIN"/>
    <property type="match status" value="1"/>
</dbReference>
<dbReference type="PANTHER" id="PTHR32319:SF0">
    <property type="entry name" value="BACTERIAL HEMOLYSIN-LIKE PROTEIN"/>
    <property type="match status" value="1"/>
</dbReference>
<dbReference type="Pfam" id="PF01728">
    <property type="entry name" value="FtsJ"/>
    <property type="match status" value="1"/>
</dbReference>
<dbReference type="Pfam" id="PF01479">
    <property type="entry name" value="S4"/>
    <property type="match status" value="1"/>
</dbReference>
<dbReference type="PIRSF" id="PIRSF005578">
    <property type="entry name" value="TlyA"/>
    <property type="match status" value="1"/>
</dbReference>
<dbReference type="SMART" id="SM00363">
    <property type="entry name" value="S4"/>
    <property type="match status" value="1"/>
</dbReference>
<dbReference type="SUPFAM" id="SSF55174">
    <property type="entry name" value="Alpha-L RNA-binding motif"/>
    <property type="match status" value="1"/>
</dbReference>
<dbReference type="SUPFAM" id="SSF53335">
    <property type="entry name" value="S-adenosyl-L-methionine-dependent methyltransferases"/>
    <property type="match status" value="1"/>
</dbReference>
<dbReference type="PROSITE" id="PS50889">
    <property type="entry name" value="S4"/>
    <property type="match status" value="1"/>
</dbReference>
<comment type="function">
    <text evidence="1">Acts as a host evasion factor, that significantly contributes to the pathogenesis of M.tuberculosis by modulating adaptive immune responses by inhibiting host-protective Th1 and Th17 cytokine responses as well as autophagy. Catalyzes the 2'-O-methylation at nucleotides C1409 in 16S rRNA and C1920 in 23S rRNA. Is likely involved in ribosomal biogenesis. Also exhibits hemolytic activity in vitro, by binding with and oligomerizing into host cell membranes.</text>
</comment>
<comment type="catalytic activity">
    <reaction evidence="1">
        <text>cytidine(1409) in 16S rRNA + S-adenosyl-L-methionine = 2'-O-methylcytidine(1409) in 16S rRNA + S-adenosyl-L-homocysteine + H(+)</text>
        <dbReference type="Rhea" id="RHEA:43204"/>
        <dbReference type="Rhea" id="RHEA-COMP:10405"/>
        <dbReference type="Rhea" id="RHEA-COMP:10406"/>
        <dbReference type="ChEBI" id="CHEBI:15378"/>
        <dbReference type="ChEBI" id="CHEBI:57856"/>
        <dbReference type="ChEBI" id="CHEBI:59789"/>
        <dbReference type="ChEBI" id="CHEBI:74495"/>
        <dbReference type="ChEBI" id="CHEBI:82748"/>
        <dbReference type="EC" id="2.1.1.227"/>
    </reaction>
</comment>
<comment type="catalytic activity">
    <reaction evidence="1">
        <text>cytidine(1920) in 23S rRNA + S-adenosyl-L-methionine = 2'-O-methylcytidine(1920) in 23S rRNA + S-adenosyl-L-homocysteine + H(+)</text>
        <dbReference type="Rhea" id="RHEA:43200"/>
        <dbReference type="Rhea" id="RHEA-COMP:10403"/>
        <dbReference type="Rhea" id="RHEA-COMP:10404"/>
        <dbReference type="ChEBI" id="CHEBI:15378"/>
        <dbReference type="ChEBI" id="CHEBI:57856"/>
        <dbReference type="ChEBI" id="CHEBI:59789"/>
        <dbReference type="ChEBI" id="CHEBI:74495"/>
        <dbReference type="ChEBI" id="CHEBI:82748"/>
        <dbReference type="EC" id="2.1.1.226"/>
    </reaction>
</comment>
<comment type="subunit">
    <text evidence="1">Can form oligomers on macrophage phagosomal membranes.</text>
</comment>
<comment type="subcellular location">
    <subcellularLocation>
        <location evidence="1">Cytoplasm</location>
    </subcellularLocation>
    <subcellularLocation>
        <location evidence="1">Secreted</location>
        <location evidence="1">Cell wall</location>
    </subcellularLocation>
    <subcellularLocation>
        <location evidence="1">Host cell membrane</location>
    </subcellularLocation>
    <text evidence="1">Can bind to target membranes such as macrophage phagosomal membranes. In native and recombinant hosts (M.smegmatis and E.coli), M.tuberculosis TlyA can reach the bacterial surface in functional form and colocalizes with the HBHA protein which is known to be part of cell-wall. TlyA does not seem to depend on either Tat or Sec pathways for translocation to cell-wall. Appears to be capable of reaching the extra-cellular milieu using a vesicle mediated transport.</text>
</comment>
<comment type="disruption phenotype">
    <text evidence="3">Inactivation leads to capreomycin resistance.</text>
</comment>
<comment type="similarity">
    <text evidence="4">Belongs to the TlyA family.</text>
</comment>
<keyword id="KW-0002">3D-structure</keyword>
<keyword id="KW-0134">Cell wall</keyword>
<keyword id="KW-0204">Cytolysis</keyword>
<keyword id="KW-0963">Cytoplasm</keyword>
<keyword id="KW-0354">Hemolysis</keyword>
<keyword id="KW-1032">Host cell membrane</keyword>
<keyword id="KW-1043">Host membrane</keyword>
<keyword id="KW-0472">Membrane</keyword>
<keyword id="KW-0489">Methyltransferase</keyword>
<keyword id="KW-1185">Reference proteome</keyword>
<keyword id="KW-0690">Ribosome biogenesis</keyword>
<keyword id="KW-0694">RNA-binding</keyword>
<keyword id="KW-0698">rRNA processing</keyword>
<keyword id="KW-0949">S-adenosyl-L-methionine</keyword>
<keyword id="KW-0964">Secreted</keyword>
<keyword id="KW-0800">Toxin</keyword>
<keyword id="KW-0808">Transferase</keyword>
<keyword id="KW-0843">Virulence</keyword>
<gene>
    <name type="primary">tlyA</name>
    <name type="ordered locus">MT1733</name>
</gene>
<protein>
    <recommendedName>
        <fullName>16S/23S rRNA (cytidine-2'-O)-methyltransferase TlyA</fullName>
        <ecNumber evidence="1">2.1.1.226</ecNumber>
        <ecNumber evidence="1">2.1.1.227</ecNumber>
    </recommendedName>
    <alternativeName>
        <fullName>16S rRNA (cytidine1409-2'-O)-methyltransferase</fullName>
    </alternativeName>
    <alternativeName>
        <fullName>23S rRNA (cytidine1920-2'-O)-methyltransferase</fullName>
    </alternativeName>
    <alternativeName>
        <fullName>Hemolysin TlyA</fullName>
    </alternativeName>
</protein>
<reference key="1">
    <citation type="journal article" date="2002" name="J. Bacteriol.">
        <title>Whole-genome comparison of Mycobacterium tuberculosis clinical and laboratory strains.</title>
        <authorList>
            <person name="Fleischmann R.D."/>
            <person name="Alland D."/>
            <person name="Eisen J.A."/>
            <person name="Carpenter L."/>
            <person name="White O."/>
            <person name="Peterson J.D."/>
            <person name="DeBoy R.T."/>
            <person name="Dodson R.J."/>
            <person name="Gwinn M.L."/>
            <person name="Haft D.H."/>
            <person name="Hickey E.K."/>
            <person name="Kolonay J.F."/>
            <person name="Nelson W.C."/>
            <person name="Umayam L.A."/>
            <person name="Ermolaeva M.D."/>
            <person name="Salzberg S.L."/>
            <person name="Delcher A."/>
            <person name="Utterback T.R."/>
            <person name="Weidman J.F."/>
            <person name="Khouri H.M."/>
            <person name="Gill J."/>
            <person name="Mikula A."/>
            <person name="Bishai W."/>
            <person name="Jacobs W.R. Jr."/>
            <person name="Venter J.C."/>
            <person name="Fraser C.M."/>
        </authorList>
    </citation>
    <scope>NUCLEOTIDE SEQUENCE [LARGE SCALE GENOMIC DNA]</scope>
    <source>
        <strain>CDC 1551 / Oshkosh</strain>
    </source>
</reference>
<reference key="2">
    <citation type="journal article" date="2005" name="Antimicrob. Agents Chemother.">
        <title>Mutation of tlyA confers capreomycin resistance in Mycobacterium tuberculosis.</title>
        <authorList>
            <person name="Maus C.E."/>
            <person name="Plikaytis B.B."/>
            <person name="Shinnick T.M."/>
        </authorList>
    </citation>
    <scope>DISRUPTION PHENOTYPE</scope>
    <source>
        <strain>CDC 1551 / Oshkosh</strain>
    </source>
</reference>
<feature type="chain" id="PRO_0000427885" description="16S/23S rRNA (cytidine-2'-O)-methyltransferase TlyA">
    <location>
        <begin position="1"/>
        <end position="268"/>
    </location>
</feature>
<feature type="domain" description="S4 RNA-binding" evidence="2">
    <location>
        <begin position="5"/>
        <end position="67"/>
    </location>
</feature>
<feature type="helix" evidence="5">
    <location>
        <begin position="65"/>
        <end position="77"/>
    </location>
</feature>
<feature type="strand" evidence="5">
    <location>
        <begin position="85"/>
        <end position="88"/>
    </location>
</feature>
<feature type="strand" evidence="5">
    <location>
        <begin position="92"/>
        <end position="94"/>
    </location>
</feature>
<feature type="helix" evidence="5">
    <location>
        <begin position="95"/>
        <end position="102"/>
    </location>
</feature>
<feature type="strand" evidence="5">
    <location>
        <begin position="106"/>
        <end position="112"/>
    </location>
</feature>
<feature type="strand" evidence="5">
    <location>
        <begin position="114"/>
        <end position="116"/>
    </location>
</feature>
<feature type="helix" evidence="5">
    <location>
        <begin position="120"/>
        <end position="123"/>
    </location>
</feature>
<feature type="strand" evidence="5">
    <location>
        <begin position="128"/>
        <end position="132"/>
    </location>
</feature>
<feature type="helix" evidence="5">
    <location>
        <begin position="136"/>
        <end position="138"/>
    </location>
</feature>
<feature type="helix" evidence="5">
    <location>
        <begin position="141"/>
        <end position="144"/>
    </location>
</feature>
<feature type="strand" evidence="5">
    <location>
        <begin position="148"/>
        <end position="153"/>
    </location>
</feature>
<feature type="helix" evidence="5">
    <location>
        <begin position="160"/>
        <end position="169"/>
    </location>
</feature>
<feature type="strand" evidence="5">
    <location>
        <begin position="171"/>
        <end position="181"/>
    </location>
</feature>
<feature type="helix" evidence="5">
    <location>
        <begin position="183"/>
        <end position="185"/>
    </location>
</feature>
<feature type="turn" evidence="5">
    <location>
        <begin position="194"/>
        <end position="196"/>
    </location>
</feature>
<feature type="helix" evidence="5">
    <location>
        <begin position="201"/>
        <end position="217"/>
    </location>
</feature>
<feature type="strand" evidence="5">
    <location>
        <begin position="221"/>
        <end position="227"/>
    </location>
</feature>
<feature type="strand" evidence="5">
    <location>
        <begin position="239"/>
        <end position="246"/>
    </location>
</feature>
<feature type="helix" evidence="5">
    <location>
        <begin position="253"/>
        <end position="266"/>
    </location>
</feature>
<name>TLYA_MYCTO</name>